<evidence type="ECO:0000255" key="1">
    <source>
        <dbReference type="HAMAP-Rule" id="MF_01498"/>
    </source>
</evidence>
<feature type="chain" id="PRO_0000286659" description="DNA repair protein RadA">
    <location>
        <begin position="1"/>
        <end position="448"/>
    </location>
</feature>
<feature type="zinc finger region" description="C4-type" evidence="1">
    <location>
        <begin position="10"/>
        <end position="27"/>
    </location>
</feature>
<feature type="region of interest" description="Lon-protease-like" evidence="1">
    <location>
        <begin position="349"/>
        <end position="448"/>
    </location>
</feature>
<feature type="short sequence motif" description="RadA KNRFG motif" evidence="1">
    <location>
        <begin position="250"/>
        <end position="254"/>
    </location>
</feature>
<feature type="binding site" evidence="1">
    <location>
        <begin position="91"/>
        <end position="98"/>
    </location>
    <ligand>
        <name>ATP</name>
        <dbReference type="ChEBI" id="CHEBI:30616"/>
    </ligand>
</feature>
<name>RADA_RICBR</name>
<organism>
    <name type="scientific">Rickettsia bellii (strain RML369-C)</name>
    <dbReference type="NCBI Taxonomy" id="336407"/>
    <lineage>
        <taxon>Bacteria</taxon>
        <taxon>Pseudomonadati</taxon>
        <taxon>Pseudomonadota</taxon>
        <taxon>Alphaproteobacteria</taxon>
        <taxon>Rickettsiales</taxon>
        <taxon>Rickettsiaceae</taxon>
        <taxon>Rickettsieae</taxon>
        <taxon>Rickettsia</taxon>
        <taxon>belli group</taxon>
    </lineage>
</organism>
<comment type="function">
    <text evidence="1">DNA-dependent ATPase involved in processing of recombination intermediates, plays a role in repairing DNA breaks. Stimulates the branch migration of RecA-mediated strand transfer reactions, allowing the 3' invading strand to extend heteroduplex DNA faster. Binds ssDNA in the presence of ADP but not other nucleotides, has ATPase activity that is stimulated by ssDNA and various branched DNA structures, but inhibited by SSB. Does not have RecA's homology-searching function.</text>
</comment>
<comment type="domain">
    <text evidence="1">Has a putative N-terminal zinc-finger, a middle region with homology to RecA with ATPase motifs including the RadA KNRFG motif, while the C-terminus is homologous to Lon protease.</text>
</comment>
<comment type="similarity">
    <text evidence="1">Belongs to the RecA family. RadA subfamily.</text>
</comment>
<reference key="1">
    <citation type="journal article" date="2006" name="PLoS Genet.">
        <title>Genome sequence of Rickettsia bellii illuminates the role of amoebae in gene exchanges between intracellular pathogens.</title>
        <authorList>
            <person name="Ogata H."/>
            <person name="La Scola B."/>
            <person name="Audic S."/>
            <person name="Renesto P."/>
            <person name="Blanc G."/>
            <person name="Robert C."/>
            <person name="Fournier P.-E."/>
            <person name="Claverie J.-M."/>
            <person name="Raoult D."/>
        </authorList>
    </citation>
    <scope>NUCLEOTIDE SEQUENCE [LARGE SCALE GENOMIC DNA]</scope>
    <source>
        <strain>RML369-C</strain>
    </source>
</reference>
<proteinExistence type="inferred from homology"/>
<accession>Q1RJR7</accession>
<dbReference type="EC" id="3.6.4.-" evidence="1"/>
<dbReference type="EMBL" id="CP000087">
    <property type="protein sequence ID" value="ABE04397.1"/>
    <property type="molecule type" value="Genomic_DNA"/>
</dbReference>
<dbReference type="RefSeq" id="WP_011477008.1">
    <property type="nucleotide sequence ID" value="NC_007940.1"/>
</dbReference>
<dbReference type="SMR" id="Q1RJR7"/>
<dbReference type="MEROPS" id="S16.A04"/>
<dbReference type="KEGG" id="rbe:RBE_0316"/>
<dbReference type="eggNOG" id="COG1066">
    <property type="taxonomic scope" value="Bacteria"/>
</dbReference>
<dbReference type="HOGENOM" id="CLU_018264_0_1_5"/>
<dbReference type="OrthoDB" id="9803906at2"/>
<dbReference type="Proteomes" id="UP000001951">
    <property type="component" value="Chromosome"/>
</dbReference>
<dbReference type="GO" id="GO:0005829">
    <property type="term" value="C:cytosol"/>
    <property type="evidence" value="ECO:0007669"/>
    <property type="project" value="TreeGrafter"/>
</dbReference>
<dbReference type="GO" id="GO:0005524">
    <property type="term" value="F:ATP binding"/>
    <property type="evidence" value="ECO:0007669"/>
    <property type="project" value="UniProtKB-UniRule"/>
</dbReference>
<dbReference type="GO" id="GO:0016887">
    <property type="term" value="F:ATP hydrolysis activity"/>
    <property type="evidence" value="ECO:0007669"/>
    <property type="project" value="InterPro"/>
</dbReference>
<dbReference type="GO" id="GO:0140664">
    <property type="term" value="F:ATP-dependent DNA damage sensor activity"/>
    <property type="evidence" value="ECO:0007669"/>
    <property type="project" value="InterPro"/>
</dbReference>
<dbReference type="GO" id="GO:0003684">
    <property type="term" value="F:damaged DNA binding"/>
    <property type="evidence" value="ECO:0007669"/>
    <property type="project" value="InterPro"/>
</dbReference>
<dbReference type="GO" id="GO:0008270">
    <property type="term" value="F:zinc ion binding"/>
    <property type="evidence" value="ECO:0007669"/>
    <property type="project" value="UniProtKB-KW"/>
</dbReference>
<dbReference type="GO" id="GO:0000725">
    <property type="term" value="P:recombinational repair"/>
    <property type="evidence" value="ECO:0007669"/>
    <property type="project" value="UniProtKB-UniRule"/>
</dbReference>
<dbReference type="CDD" id="cd01121">
    <property type="entry name" value="RadA_SMS_N"/>
    <property type="match status" value="1"/>
</dbReference>
<dbReference type="FunFam" id="3.40.50.300:FF:000050">
    <property type="entry name" value="DNA repair protein RadA"/>
    <property type="match status" value="1"/>
</dbReference>
<dbReference type="Gene3D" id="3.30.230.10">
    <property type="match status" value="1"/>
</dbReference>
<dbReference type="Gene3D" id="3.40.50.300">
    <property type="entry name" value="P-loop containing nucleotide triphosphate hydrolases"/>
    <property type="match status" value="1"/>
</dbReference>
<dbReference type="HAMAP" id="MF_01498">
    <property type="entry name" value="RadA_bact"/>
    <property type="match status" value="1"/>
</dbReference>
<dbReference type="InterPro" id="IPR003593">
    <property type="entry name" value="AAA+_ATPase"/>
</dbReference>
<dbReference type="InterPro" id="IPR004504">
    <property type="entry name" value="DNA_repair_RadA"/>
</dbReference>
<dbReference type="InterPro" id="IPR014774">
    <property type="entry name" value="KaiC-like_dom"/>
</dbReference>
<dbReference type="InterPro" id="IPR027417">
    <property type="entry name" value="P-loop_NTPase"/>
</dbReference>
<dbReference type="InterPro" id="IPR020588">
    <property type="entry name" value="RecA_ATP-bd"/>
</dbReference>
<dbReference type="InterPro" id="IPR020568">
    <property type="entry name" value="Ribosomal_Su5_D2-typ_SF"/>
</dbReference>
<dbReference type="InterPro" id="IPR014721">
    <property type="entry name" value="Ribsml_uS5_D2-typ_fold_subgr"/>
</dbReference>
<dbReference type="InterPro" id="IPR041166">
    <property type="entry name" value="Rubredoxin_2"/>
</dbReference>
<dbReference type="NCBIfam" id="TIGR00416">
    <property type="entry name" value="sms"/>
    <property type="match status" value="1"/>
</dbReference>
<dbReference type="PANTHER" id="PTHR32472">
    <property type="entry name" value="DNA REPAIR PROTEIN RADA"/>
    <property type="match status" value="1"/>
</dbReference>
<dbReference type="PANTHER" id="PTHR32472:SF10">
    <property type="entry name" value="DNA REPAIR PROTEIN RADA-LIKE PROTEIN"/>
    <property type="match status" value="1"/>
</dbReference>
<dbReference type="Pfam" id="PF06745">
    <property type="entry name" value="ATPase"/>
    <property type="match status" value="1"/>
</dbReference>
<dbReference type="Pfam" id="PF13541">
    <property type="entry name" value="ChlI"/>
    <property type="match status" value="1"/>
</dbReference>
<dbReference type="Pfam" id="PF18073">
    <property type="entry name" value="Zn_ribbon_LapB"/>
    <property type="match status" value="1"/>
</dbReference>
<dbReference type="PRINTS" id="PR01874">
    <property type="entry name" value="DNAREPAIRADA"/>
</dbReference>
<dbReference type="SMART" id="SM00382">
    <property type="entry name" value="AAA"/>
    <property type="match status" value="1"/>
</dbReference>
<dbReference type="SUPFAM" id="SSF52540">
    <property type="entry name" value="P-loop containing nucleoside triphosphate hydrolases"/>
    <property type="match status" value="1"/>
</dbReference>
<dbReference type="SUPFAM" id="SSF54211">
    <property type="entry name" value="Ribosomal protein S5 domain 2-like"/>
    <property type="match status" value="1"/>
</dbReference>
<dbReference type="PROSITE" id="PS50162">
    <property type="entry name" value="RECA_2"/>
    <property type="match status" value="1"/>
</dbReference>
<keyword id="KW-0067">ATP-binding</keyword>
<keyword id="KW-0227">DNA damage</keyword>
<keyword id="KW-0234">DNA repair</keyword>
<keyword id="KW-0238">DNA-binding</keyword>
<keyword id="KW-0378">Hydrolase</keyword>
<keyword id="KW-0479">Metal-binding</keyword>
<keyword id="KW-0547">Nucleotide-binding</keyword>
<keyword id="KW-0346">Stress response</keyword>
<keyword id="KW-0862">Zinc</keyword>
<keyword id="KW-0863">Zinc-finger</keyword>
<gene>
    <name evidence="1" type="primary">radA</name>
    <name type="ordered locus">RBE_0316</name>
</gene>
<protein>
    <recommendedName>
        <fullName evidence="1">DNA repair protein RadA</fullName>
        <ecNumber evidence="1">3.6.4.-</ecNumber>
    </recommendedName>
    <alternativeName>
        <fullName evidence="1">Branch migration protein RadA</fullName>
    </alternativeName>
</protein>
<sequence>MTKEKKHYICSNCGNTSPKWSGQCFDCGVWGSIIEEKVISNKNIAKIGSKQDFEQLSSNVTDQVRISTPIGELDRVLGGGLVLGSAILIGGDPGIGKSTLLLQLVAGSFASKVKCLYITGEESLDQIKLRALRLDLVNDKTNILAANNLEDIIASLEANKGNIDLVVIDSIQTIATRELTSPPGTVSQIRTCAHELVNYAKQNNIIILLSCHVTKDGQLAGPKLLEHLVDTVLYFEGDHNNHFRILRSYKNRFGGVGEIGVFEMSSSGLIEVTNPSELFLMKREQNVIGTAIFAGIEGSRPLLMEVQALIVPSNMVTPRRSAVGWDVNRLSMILAVLSSRIGLNLANYEVYLSIAGGLKINEPASDLAVAASLISAATNKPLPEHSVFFGEISLSGEIRKTAKAEARIKEALKLGFNNIICSKSENLTHDFISSIAHLKDLKLLLGSS</sequence>